<keyword id="KW-1185">Reference proteome</keyword>
<sequence>MSDEKQELFEFPCRFPLKIMGERHDEFVTTITEVVRVHAPDLAEIDVVLRESSGGRFYALTVTVTATSRQQLDNIYLSLTGHPMVKMVL</sequence>
<feature type="chain" id="PRO_0000209295" description="UPF0250 protein CV_3095">
    <location>
        <begin position="1"/>
        <end position="89"/>
    </location>
</feature>
<evidence type="ECO:0000255" key="1">
    <source>
        <dbReference type="HAMAP-Rule" id="MF_00659"/>
    </source>
</evidence>
<organism>
    <name type="scientific">Chromobacterium violaceum (strain ATCC 12472 / DSM 30191 / JCM 1249 / CCUG 213 / NBRC 12614 / NCIMB 9131 / NCTC 9757 / MK)</name>
    <dbReference type="NCBI Taxonomy" id="243365"/>
    <lineage>
        <taxon>Bacteria</taxon>
        <taxon>Pseudomonadati</taxon>
        <taxon>Pseudomonadota</taxon>
        <taxon>Betaproteobacteria</taxon>
        <taxon>Neisseriales</taxon>
        <taxon>Chromobacteriaceae</taxon>
        <taxon>Chromobacterium</taxon>
    </lineage>
</organism>
<accession>Q7NTG1</accession>
<proteinExistence type="inferred from homology"/>
<protein>
    <recommendedName>
        <fullName evidence="1">UPF0250 protein CV_3095</fullName>
    </recommendedName>
</protein>
<comment type="similarity">
    <text evidence="1">Belongs to the UPF0250 family.</text>
</comment>
<gene>
    <name type="ordered locus">CV_3095</name>
</gene>
<reference key="1">
    <citation type="journal article" date="2003" name="Proc. Natl. Acad. Sci. U.S.A.">
        <title>The complete genome sequence of Chromobacterium violaceum reveals remarkable and exploitable bacterial adaptability.</title>
        <authorList>
            <person name="Vasconcelos A.T.R."/>
            <person name="de Almeida D.F."/>
            <person name="Hungria M."/>
            <person name="Guimaraes C.T."/>
            <person name="Antonio R.V."/>
            <person name="Almeida F.C."/>
            <person name="de Almeida L.G.P."/>
            <person name="de Almeida R."/>
            <person name="Alves-Gomes J.A."/>
            <person name="Andrade E.M."/>
            <person name="Araripe J."/>
            <person name="de Araujo M.F.F."/>
            <person name="Astolfi-Filho S."/>
            <person name="Azevedo V."/>
            <person name="Baptista A.J."/>
            <person name="Bataus L.A.M."/>
            <person name="Batista J.S."/>
            <person name="Belo A."/>
            <person name="van den Berg C."/>
            <person name="Bogo M."/>
            <person name="Bonatto S."/>
            <person name="Bordignon J."/>
            <person name="Brigido M.M."/>
            <person name="Brito C.A."/>
            <person name="Brocchi M."/>
            <person name="Burity H.A."/>
            <person name="Camargo A.A."/>
            <person name="Cardoso D.D.P."/>
            <person name="Carneiro N.P."/>
            <person name="Carraro D.M."/>
            <person name="Carvalho C.M.B."/>
            <person name="Cascardo J.C.M."/>
            <person name="Cavada B.S."/>
            <person name="Chueire L.M.O."/>
            <person name="Creczynski-Pasa T.B."/>
            <person name="Cunha-Junior N.C."/>
            <person name="Fagundes N."/>
            <person name="Falcao C.L."/>
            <person name="Fantinatti F."/>
            <person name="Farias I.P."/>
            <person name="Felipe M.S.S."/>
            <person name="Ferrari L.P."/>
            <person name="Ferro J.A."/>
            <person name="Ferro M.I.T."/>
            <person name="Franco G.R."/>
            <person name="Freitas N.S.A."/>
            <person name="Furlan L.R."/>
            <person name="Gazzinelli R.T."/>
            <person name="Gomes E.A."/>
            <person name="Goncalves P.R."/>
            <person name="Grangeiro T.B."/>
            <person name="Grattapaglia D."/>
            <person name="Grisard E.C."/>
            <person name="Hanna E.S."/>
            <person name="Jardim S.N."/>
            <person name="Laurino J."/>
            <person name="Leoi L.C.T."/>
            <person name="Lima L.F.A."/>
            <person name="Loureiro M.F."/>
            <person name="Lyra M.C.C.P."/>
            <person name="Madeira H.M.F."/>
            <person name="Manfio G.P."/>
            <person name="Maranhao A.Q."/>
            <person name="Martins W.S."/>
            <person name="di Mauro S.M.Z."/>
            <person name="de Medeiros S.R.B."/>
            <person name="Meissner R.V."/>
            <person name="Moreira M.A.M."/>
            <person name="Nascimento F.F."/>
            <person name="Nicolas M.F."/>
            <person name="Oliveira J.G."/>
            <person name="Oliveira S.C."/>
            <person name="Paixao R.F.C."/>
            <person name="Parente J.A."/>
            <person name="Pedrosa F.O."/>
            <person name="Pena S.D.J."/>
            <person name="Pereira J.O."/>
            <person name="Pereira M."/>
            <person name="Pinto L.S.R.C."/>
            <person name="Pinto L.S."/>
            <person name="Porto J.I.R."/>
            <person name="Potrich D.P."/>
            <person name="Ramalho-Neto C.E."/>
            <person name="Reis A.M.M."/>
            <person name="Rigo L.U."/>
            <person name="Rondinelli E."/>
            <person name="Santos E.B.P."/>
            <person name="Santos F.R."/>
            <person name="Schneider M.P.C."/>
            <person name="Seuanez H.N."/>
            <person name="Silva A.M.R."/>
            <person name="da Silva A.L.C."/>
            <person name="Silva D.W."/>
            <person name="Silva R."/>
            <person name="Simoes I.C."/>
            <person name="Simon D."/>
            <person name="Soares C.M.A."/>
            <person name="Soares R.B.A."/>
            <person name="Souza E.M."/>
            <person name="Souza K.R.L."/>
            <person name="Souza R.C."/>
            <person name="Steffens M.B.R."/>
            <person name="Steindel M."/>
            <person name="Teixeira S.R."/>
            <person name="Urmenyi T."/>
            <person name="Vettore A."/>
            <person name="Wassem R."/>
            <person name="Zaha A."/>
            <person name="Simpson A.J.G."/>
        </authorList>
    </citation>
    <scope>NUCLEOTIDE SEQUENCE [LARGE SCALE GENOMIC DNA]</scope>
    <source>
        <strain>ATCC 12472 / DSM 30191 / JCM 1249 / CCUG 213 / NBRC 12614 / NCIMB 9131 / NCTC 9757 / MK</strain>
    </source>
</reference>
<dbReference type="EMBL" id="AE016825">
    <property type="protein sequence ID" value="AAQ60763.1"/>
    <property type="molecule type" value="Genomic_DNA"/>
</dbReference>
<dbReference type="RefSeq" id="WP_011136642.1">
    <property type="nucleotide sequence ID" value="NC_005085.1"/>
</dbReference>
<dbReference type="SMR" id="Q7NTG1"/>
<dbReference type="STRING" id="243365.CV_3095"/>
<dbReference type="GeneID" id="66368806"/>
<dbReference type="KEGG" id="cvi:CV_3095"/>
<dbReference type="eggNOG" id="COG2921">
    <property type="taxonomic scope" value="Bacteria"/>
</dbReference>
<dbReference type="HOGENOM" id="CLU_161438_1_2_4"/>
<dbReference type="OrthoDB" id="9793424at2"/>
<dbReference type="Proteomes" id="UP000001424">
    <property type="component" value="Chromosome"/>
</dbReference>
<dbReference type="Gene3D" id="3.30.70.260">
    <property type="match status" value="1"/>
</dbReference>
<dbReference type="HAMAP" id="MF_00659">
    <property type="entry name" value="UPF0250"/>
    <property type="match status" value="1"/>
</dbReference>
<dbReference type="InterPro" id="IPR007454">
    <property type="entry name" value="UPF0250_YbeD-like"/>
</dbReference>
<dbReference type="InterPro" id="IPR027471">
    <property type="entry name" value="YbeD-like_sf"/>
</dbReference>
<dbReference type="PANTHER" id="PTHR38036">
    <property type="entry name" value="UPF0250 PROTEIN YBED"/>
    <property type="match status" value="1"/>
</dbReference>
<dbReference type="PANTHER" id="PTHR38036:SF1">
    <property type="entry name" value="UPF0250 PROTEIN YBED"/>
    <property type="match status" value="1"/>
</dbReference>
<dbReference type="Pfam" id="PF04359">
    <property type="entry name" value="DUF493"/>
    <property type="match status" value="1"/>
</dbReference>
<dbReference type="SUPFAM" id="SSF117991">
    <property type="entry name" value="YbeD/HP0495-like"/>
    <property type="match status" value="1"/>
</dbReference>
<name>Y3095_CHRVO</name>